<organism>
    <name type="scientific">Nitrosomonas europaea (strain ATCC 19718 / CIP 103999 / KCTC 2705 / NBRC 14298)</name>
    <dbReference type="NCBI Taxonomy" id="228410"/>
    <lineage>
        <taxon>Bacteria</taxon>
        <taxon>Pseudomonadati</taxon>
        <taxon>Pseudomonadota</taxon>
        <taxon>Betaproteobacteria</taxon>
        <taxon>Nitrosomonadales</taxon>
        <taxon>Nitrosomonadaceae</taxon>
        <taxon>Nitrosomonas</taxon>
    </lineage>
</organism>
<reference key="1">
    <citation type="journal article" date="2003" name="J. Bacteriol.">
        <title>Complete genome sequence of the ammonia-oxidizing bacterium and obligate chemolithoautotroph Nitrosomonas europaea.</title>
        <authorList>
            <person name="Chain P."/>
            <person name="Lamerdin J.E."/>
            <person name="Larimer F.W."/>
            <person name="Regala W."/>
            <person name="Lao V."/>
            <person name="Land M.L."/>
            <person name="Hauser L."/>
            <person name="Hooper A.B."/>
            <person name="Klotz M.G."/>
            <person name="Norton J."/>
            <person name="Sayavedra-Soto L.A."/>
            <person name="Arciero D.M."/>
            <person name="Hommes N.G."/>
            <person name="Whittaker M.M."/>
            <person name="Arp D.J."/>
        </authorList>
    </citation>
    <scope>NUCLEOTIDE SEQUENCE [LARGE SCALE GENOMIC DNA]</scope>
    <source>
        <strain>ATCC 19718 / CIP 103999 / KCTC 2705 / NBRC 14298</strain>
    </source>
</reference>
<protein>
    <recommendedName>
        <fullName evidence="1">Membrane protein insertase YidC</fullName>
    </recommendedName>
    <alternativeName>
        <fullName evidence="1">Foldase YidC</fullName>
    </alternativeName>
    <alternativeName>
        <fullName evidence="1">Membrane integrase YidC</fullName>
    </alternativeName>
    <alternativeName>
        <fullName evidence="1">Membrane protein YidC</fullName>
    </alternativeName>
</protein>
<dbReference type="EMBL" id="AL954747">
    <property type="protein sequence ID" value="CAD84298.1"/>
    <property type="molecule type" value="Genomic_DNA"/>
</dbReference>
<dbReference type="RefSeq" id="WP_011111022.1">
    <property type="nucleotide sequence ID" value="NC_004757.1"/>
</dbReference>
<dbReference type="SMR" id="P59810"/>
<dbReference type="STRING" id="228410.NE0387"/>
<dbReference type="GeneID" id="87103595"/>
<dbReference type="KEGG" id="neu:NE0387"/>
<dbReference type="eggNOG" id="COG0706">
    <property type="taxonomic scope" value="Bacteria"/>
</dbReference>
<dbReference type="HOGENOM" id="CLU_016535_3_0_4"/>
<dbReference type="OrthoDB" id="9780552at2"/>
<dbReference type="PhylomeDB" id="P59810"/>
<dbReference type="Proteomes" id="UP000001416">
    <property type="component" value="Chromosome"/>
</dbReference>
<dbReference type="GO" id="GO:0005886">
    <property type="term" value="C:plasma membrane"/>
    <property type="evidence" value="ECO:0007669"/>
    <property type="project" value="UniProtKB-SubCell"/>
</dbReference>
<dbReference type="GO" id="GO:0032977">
    <property type="term" value="F:membrane insertase activity"/>
    <property type="evidence" value="ECO:0007669"/>
    <property type="project" value="InterPro"/>
</dbReference>
<dbReference type="GO" id="GO:0051205">
    <property type="term" value="P:protein insertion into membrane"/>
    <property type="evidence" value="ECO:0007669"/>
    <property type="project" value="TreeGrafter"/>
</dbReference>
<dbReference type="GO" id="GO:0015031">
    <property type="term" value="P:protein transport"/>
    <property type="evidence" value="ECO:0007669"/>
    <property type="project" value="UniProtKB-KW"/>
</dbReference>
<dbReference type="CDD" id="cd20070">
    <property type="entry name" value="5TM_YidC_Alb3"/>
    <property type="match status" value="1"/>
</dbReference>
<dbReference type="CDD" id="cd19961">
    <property type="entry name" value="EcYidC-like_peri"/>
    <property type="match status" value="1"/>
</dbReference>
<dbReference type="Gene3D" id="2.70.98.90">
    <property type="match status" value="1"/>
</dbReference>
<dbReference type="HAMAP" id="MF_01810">
    <property type="entry name" value="YidC_type1"/>
    <property type="match status" value="1"/>
</dbReference>
<dbReference type="InterPro" id="IPR019998">
    <property type="entry name" value="Membr_insert_YidC"/>
</dbReference>
<dbReference type="InterPro" id="IPR028053">
    <property type="entry name" value="Membr_insert_YidC_N"/>
</dbReference>
<dbReference type="InterPro" id="IPR001708">
    <property type="entry name" value="YidC/ALB3/OXA1/COX18"/>
</dbReference>
<dbReference type="InterPro" id="IPR028055">
    <property type="entry name" value="YidC/Oxa/ALB_C"/>
</dbReference>
<dbReference type="InterPro" id="IPR047196">
    <property type="entry name" value="YidC_ALB_C"/>
</dbReference>
<dbReference type="InterPro" id="IPR038221">
    <property type="entry name" value="YidC_periplasmic_sf"/>
</dbReference>
<dbReference type="NCBIfam" id="NF002352">
    <property type="entry name" value="PRK01318.1-3"/>
    <property type="match status" value="1"/>
</dbReference>
<dbReference type="NCBIfam" id="TIGR03593">
    <property type="entry name" value="yidC_nterm"/>
    <property type="match status" value="1"/>
</dbReference>
<dbReference type="NCBIfam" id="TIGR03592">
    <property type="entry name" value="yidC_oxa1_cterm"/>
    <property type="match status" value="1"/>
</dbReference>
<dbReference type="PANTHER" id="PTHR12428:SF65">
    <property type="entry name" value="CYTOCHROME C OXIDASE ASSEMBLY PROTEIN COX18, MITOCHONDRIAL"/>
    <property type="match status" value="1"/>
</dbReference>
<dbReference type="PANTHER" id="PTHR12428">
    <property type="entry name" value="OXA1"/>
    <property type="match status" value="1"/>
</dbReference>
<dbReference type="Pfam" id="PF02096">
    <property type="entry name" value="60KD_IMP"/>
    <property type="match status" value="1"/>
</dbReference>
<dbReference type="Pfam" id="PF14849">
    <property type="entry name" value="YidC_periplas"/>
    <property type="match status" value="1"/>
</dbReference>
<dbReference type="PRINTS" id="PR00701">
    <property type="entry name" value="60KDINNERMP"/>
</dbReference>
<dbReference type="PRINTS" id="PR01900">
    <property type="entry name" value="YIDCPROTEIN"/>
</dbReference>
<proteinExistence type="inferred from homology"/>
<gene>
    <name evidence="1" type="primary">yidC</name>
    <name type="ordered locus">NE0387</name>
</gene>
<keyword id="KW-0997">Cell inner membrane</keyword>
<keyword id="KW-1003">Cell membrane</keyword>
<keyword id="KW-0143">Chaperone</keyword>
<keyword id="KW-0472">Membrane</keyword>
<keyword id="KW-0653">Protein transport</keyword>
<keyword id="KW-1185">Reference proteome</keyword>
<keyword id="KW-0812">Transmembrane</keyword>
<keyword id="KW-1133">Transmembrane helix</keyword>
<keyword id="KW-0813">Transport</keyword>
<feature type="chain" id="PRO_0000124734" description="Membrane protein insertase YidC">
    <location>
        <begin position="1"/>
        <end position="614"/>
    </location>
</feature>
<feature type="transmembrane region" description="Helical" evidence="1">
    <location>
        <begin position="6"/>
        <end position="26"/>
    </location>
</feature>
<feature type="transmembrane region" description="Helical" evidence="1">
    <location>
        <begin position="380"/>
        <end position="400"/>
    </location>
</feature>
<feature type="transmembrane region" description="Helical" evidence="1">
    <location>
        <begin position="450"/>
        <end position="470"/>
    </location>
</feature>
<feature type="transmembrane region" description="Helical" evidence="1">
    <location>
        <begin position="484"/>
        <end position="504"/>
    </location>
</feature>
<feature type="transmembrane region" description="Helical" evidence="1">
    <location>
        <begin position="524"/>
        <end position="544"/>
    </location>
</feature>
<feature type="region of interest" description="Disordered" evidence="2">
    <location>
        <begin position="34"/>
        <end position="87"/>
    </location>
</feature>
<feature type="region of interest" description="Disordered" evidence="2">
    <location>
        <begin position="562"/>
        <end position="614"/>
    </location>
</feature>
<feature type="compositionally biased region" description="Polar residues" evidence="2">
    <location>
        <begin position="34"/>
        <end position="48"/>
    </location>
</feature>
<feature type="compositionally biased region" description="Polar residues" evidence="2">
    <location>
        <begin position="60"/>
        <end position="70"/>
    </location>
</feature>
<feature type="compositionally biased region" description="Polar residues" evidence="2">
    <location>
        <begin position="575"/>
        <end position="602"/>
    </location>
</feature>
<comment type="function">
    <text evidence="1">Required for the insertion and/or proper folding and/or complex formation of integral membrane proteins into the membrane. Involved in integration of membrane proteins that insert both dependently and independently of the Sec translocase complex, as well as at least some lipoproteins. Aids folding of multispanning membrane proteins.</text>
</comment>
<comment type="subunit">
    <text evidence="1">Interacts with the Sec translocase complex via SecD. Specifically interacts with transmembrane segments of nascent integral membrane proteins during membrane integration.</text>
</comment>
<comment type="subcellular location">
    <subcellularLocation>
        <location evidence="1">Cell inner membrane</location>
        <topology evidence="1">Multi-pass membrane protein</topology>
    </subcellularLocation>
</comment>
<comment type="similarity">
    <text evidence="1">Belongs to the OXA1/ALB3/YidC family. Type 1 subfamily.</text>
</comment>
<sequence>MDNKKIVLLIIFSTSLLFLWDAWIKEQEKFNNPPAITQADSSAGSTQSRNDDSLPVPGSELTSSQASPDTNGIPASGGNGDSVTPRLLPSGEQIRVVTDKVIAEIDTIGGDLRRLELLQQPSSEDKDTPYALLYSEAARTYIAQSGLVGEGLPNHKTTFRAESDIRNYELSSGEDKIVIRLLAPEAQGVQVIKTYTFHRDSYVIDVGFEVENKGDATVRPFAYFQMLRDGNPPPAKTMMIPTFLGAAVYTEEGKYQKIPFSDLDKNKADYPANANNGWIAMLEHYFLTAWLPQQQTPREFFAKRQSDNLYSAGVIVPAGVIAPGEIAATTMPFYAGPEEQDNLEGLAPGLDLTVDYGWLTVIAKPLFRLLSFYHSWTDNWGVAIILLTMTVKLLFFPLSAAGYRSMAKLRLVTPKLKRIQDQYKGDRQRMHQAMMEFYKEEKINPMGGCFPILVQIPVFIALYWTILAAVELRYAPLALWIDDLSSPDPFYMLPLLMGISMFVQTKLNPTPTDPLQAKIMQIMPVAFSAIFFFFPAGLVLYSLVNNILSIAQQWKITKMYGTAPSKDTPEPPVSKQVNSSENPETTANSPADSPKQPQTPANNPRKMYKRTRKK</sequence>
<evidence type="ECO:0000255" key="1">
    <source>
        <dbReference type="HAMAP-Rule" id="MF_01810"/>
    </source>
</evidence>
<evidence type="ECO:0000256" key="2">
    <source>
        <dbReference type="SAM" id="MobiDB-lite"/>
    </source>
</evidence>
<accession>P59810</accession>
<name>YIDC_NITEU</name>